<name>CTR1_YEAST</name>
<reference key="1">
    <citation type="journal article" date="1994" name="Cell">
        <title>Molecular characterization of a copper transport protein in S. cerevisiae: an unexpected role for copper in iron transport.</title>
        <authorList>
            <person name="Dancis A."/>
            <person name="Yuan D.S."/>
            <person name="Haile D."/>
            <person name="Askwith C."/>
            <person name="Eide D."/>
            <person name="Moehle C."/>
            <person name="Kaplan J."/>
            <person name="Klausner R.D."/>
        </authorList>
    </citation>
    <scope>NUCLEOTIDE SEQUENCE [GENOMIC DNA]</scope>
    <scope>DOMAIN</scope>
    <scope>FUNCTION</scope>
    <scope>DISRUPTION PHENOTYPE</scope>
    <scope>SUBCELLULAR LOCATION</scope>
    <scope>TOPOLOGY</scope>
</reference>
<reference key="2">
    <citation type="journal article" date="1997" name="Nature">
        <title>The nucleotide sequence of Saccharomyces cerevisiae chromosome XVI.</title>
        <authorList>
            <person name="Bussey H."/>
            <person name="Storms R.K."/>
            <person name="Ahmed A."/>
            <person name="Albermann K."/>
            <person name="Allen E."/>
            <person name="Ansorge W."/>
            <person name="Araujo R."/>
            <person name="Aparicio A."/>
            <person name="Barrell B.G."/>
            <person name="Badcock K."/>
            <person name="Benes V."/>
            <person name="Botstein D."/>
            <person name="Bowman S."/>
            <person name="Brueckner M."/>
            <person name="Carpenter J."/>
            <person name="Cherry J.M."/>
            <person name="Chung E."/>
            <person name="Churcher C.M."/>
            <person name="Coster F."/>
            <person name="Davis K."/>
            <person name="Davis R.W."/>
            <person name="Dietrich F.S."/>
            <person name="Delius H."/>
            <person name="DiPaolo T."/>
            <person name="Dubois E."/>
            <person name="Duesterhoeft A."/>
            <person name="Duncan M."/>
            <person name="Floeth M."/>
            <person name="Fortin N."/>
            <person name="Friesen J.D."/>
            <person name="Fritz C."/>
            <person name="Goffeau A."/>
            <person name="Hall J."/>
            <person name="Hebling U."/>
            <person name="Heumann K."/>
            <person name="Hilbert H."/>
            <person name="Hillier L.W."/>
            <person name="Hunicke-Smith S."/>
            <person name="Hyman R.W."/>
            <person name="Johnston M."/>
            <person name="Kalman S."/>
            <person name="Kleine K."/>
            <person name="Komp C."/>
            <person name="Kurdi O."/>
            <person name="Lashkari D."/>
            <person name="Lew H."/>
            <person name="Lin A."/>
            <person name="Lin D."/>
            <person name="Louis E.J."/>
            <person name="Marathe R."/>
            <person name="Messenguy F."/>
            <person name="Mewes H.-W."/>
            <person name="Mirtipati S."/>
            <person name="Moestl D."/>
            <person name="Mueller-Auer S."/>
            <person name="Namath A."/>
            <person name="Nentwich U."/>
            <person name="Oefner P."/>
            <person name="Pearson D."/>
            <person name="Petel F.X."/>
            <person name="Pohl T.M."/>
            <person name="Purnelle B."/>
            <person name="Rajandream M.A."/>
            <person name="Rechmann S."/>
            <person name="Rieger M."/>
            <person name="Riles L."/>
            <person name="Roberts D."/>
            <person name="Schaefer M."/>
            <person name="Scharfe M."/>
            <person name="Scherens B."/>
            <person name="Schramm S."/>
            <person name="Schroeder M."/>
            <person name="Sdicu A.-M."/>
            <person name="Tettelin H."/>
            <person name="Urrestarazu L.A."/>
            <person name="Ushinsky S."/>
            <person name="Vierendeels F."/>
            <person name="Vissers S."/>
            <person name="Voss H."/>
            <person name="Walsh S.V."/>
            <person name="Wambutt R."/>
            <person name="Wang Y."/>
            <person name="Wedler E."/>
            <person name="Wedler H."/>
            <person name="Winnett E."/>
            <person name="Zhong W.-W."/>
            <person name="Zollner A."/>
            <person name="Vo D.H."/>
            <person name="Hani J."/>
        </authorList>
    </citation>
    <scope>NUCLEOTIDE SEQUENCE [LARGE SCALE GENOMIC DNA]</scope>
    <source>
        <strain>ATCC 204508 / S288c</strain>
    </source>
</reference>
<reference key="3">
    <citation type="journal article" date="2014" name="G3 (Bethesda)">
        <title>The reference genome sequence of Saccharomyces cerevisiae: Then and now.</title>
        <authorList>
            <person name="Engel S.R."/>
            <person name="Dietrich F.S."/>
            <person name="Fisk D.G."/>
            <person name="Binkley G."/>
            <person name="Balakrishnan R."/>
            <person name="Costanzo M.C."/>
            <person name="Dwight S.S."/>
            <person name="Hitz B.C."/>
            <person name="Karra K."/>
            <person name="Nash R.S."/>
            <person name="Weng S."/>
            <person name="Wong E.D."/>
            <person name="Lloyd P."/>
            <person name="Skrzypek M.S."/>
            <person name="Miyasato S.R."/>
            <person name="Simison M."/>
            <person name="Cherry J.M."/>
        </authorList>
    </citation>
    <scope>GENOME REANNOTATION</scope>
    <source>
        <strain>ATCC 204508 / S288c</strain>
    </source>
</reference>
<reference key="4">
    <citation type="journal article" date="2007" name="Genome Res.">
        <title>Approaching a complete repository of sequence-verified protein-encoding clones for Saccharomyces cerevisiae.</title>
        <authorList>
            <person name="Hu Y."/>
            <person name="Rolfs A."/>
            <person name="Bhullar B."/>
            <person name="Murthy T.V.S."/>
            <person name="Zhu C."/>
            <person name="Berger M.F."/>
            <person name="Camargo A.A."/>
            <person name="Kelley F."/>
            <person name="McCarron S."/>
            <person name="Jepson D."/>
            <person name="Richardson A."/>
            <person name="Raphael J."/>
            <person name="Moreira D."/>
            <person name="Taycher E."/>
            <person name="Zuo D."/>
            <person name="Mohr S."/>
            <person name="Kane M.F."/>
            <person name="Williamson J."/>
            <person name="Simpson A.J.G."/>
            <person name="Bulyk M.L."/>
            <person name="Harlow E."/>
            <person name="Marsischky G."/>
            <person name="Kolodner R.D."/>
            <person name="LaBaer J."/>
        </authorList>
    </citation>
    <scope>NUCLEOTIDE SEQUENCE [GENOMIC DNA]</scope>
    <source>
        <strain>ATCC 204508 / S288c</strain>
    </source>
</reference>
<reference key="5">
    <citation type="journal article" date="1994" name="J. Biol. Chem.">
        <title>The Saccharomyces cerevisiae copper transport protein (Ctr1p). Biochemical characterization, regulation by copper, and physiologic role in copper uptake.</title>
        <authorList>
            <person name="Dancis A."/>
            <person name="Haile D."/>
            <person name="Yuan D.S."/>
            <person name="Klausner R.D."/>
        </authorList>
    </citation>
    <scope>FUNCTION</scope>
    <scope>TRANSPORT ACTIVITY</scope>
    <scope>SUBUNIT</scope>
    <scope>INDUCTION</scope>
    <scope>DISRUPTION PHENOTYPE</scope>
    <scope>GLYCOSYLATION</scope>
</reference>
<reference key="6">
    <citation type="journal article" date="1996" name="EMBO J.">
        <title>Copper-dependent degradation of the Saccharomyces cerevisiae plasma membrane copper transporter Ctr1p in the apparent absence of endocytosis.</title>
        <authorList>
            <person name="Ooi C.E."/>
            <person name="Rabinovich E."/>
            <person name="Dancis A."/>
            <person name="Bonifacino J.S."/>
            <person name="Klausner R.D."/>
        </authorList>
    </citation>
    <scope>PROTEIN TURNOVER</scope>
</reference>
<reference key="7">
    <citation type="journal article" date="1996" name="Genes Dev.">
        <title>A widespread transposable element masks expression of a yeast copper transport gene.</title>
        <authorList>
            <person name="Knight S.A.B."/>
            <person name="Labbe S."/>
            <person name="Kwon L.F."/>
            <person name="Kosman D.J."/>
            <person name="Thiele D.J."/>
        </authorList>
    </citation>
    <scope>FUNCTION</scope>
    <scope>DISRUPTION PHENOTYPE</scope>
</reference>
<reference key="8">
    <citation type="journal article" date="1997" name="J. Biol. Chem.">
        <title>Copper-specific transcriptional repression of yeast genes encoding critical components in the copper transport pathway.</title>
        <authorList>
            <person name="Labbe S."/>
            <person name="Zhu Z."/>
            <person name="Thiele D.J."/>
        </authorList>
    </citation>
    <scope>INDUCTION</scope>
</reference>
<reference key="9">
    <citation type="journal article" date="1997" name="J. Biol. Chem.">
        <title>Homeostatic regulation of copper uptake in yeast via direct binding of MAC1 protein to upstream regulatory sequences of FRE1 and CTR1.</title>
        <authorList>
            <person name="Yamaguchi-Iwai Y."/>
            <person name="Serpe M."/>
            <person name="Haile D."/>
            <person name="Yang W."/>
            <person name="Kosman D.J."/>
            <person name="Klausner R.D."/>
            <person name="Dancis A."/>
        </authorList>
    </citation>
    <scope>INDUCTION</scope>
</reference>
<reference key="10">
    <citation type="journal article" date="1998" name="J. Biol. Chem.">
        <title>Mapping of the DNA binding domain of the copper-responsive transcription factor Mac1 from Saccharomyces cerevisiae.</title>
        <authorList>
            <person name="Jensen L.T."/>
            <person name="Posewitz M.C."/>
            <person name="Srinivasan C."/>
            <person name="Winge D.R."/>
        </authorList>
    </citation>
    <scope>INDUCTION</scope>
</reference>
<reference key="11">
    <citation type="journal article" date="1998" name="Mol. Cell. Biol.">
        <title>Dynamic regulation of copper uptake and detoxification genes in Saccharomyces cerevisiae.</title>
        <authorList>
            <person name="Pena M.M."/>
            <person name="Koch K.A."/>
            <person name="Thiele D.J."/>
        </authorList>
    </citation>
    <scope>INDUCTION</scope>
</reference>
<reference key="12">
    <citation type="journal article" date="1999" name="J. Biol. Chem.">
        <title>Evidence for (Mac1p)2.DNA ternary complex formation in Mac1p-dependent transactivation at the CTR1 promoter.</title>
        <authorList>
            <person name="Joshi A."/>
            <person name="Serpe M."/>
            <person name="Kosman D.J."/>
        </authorList>
    </citation>
    <scope>INDUCTION</scope>
</reference>
<reference key="13">
    <citation type="journal article" date="1999" name="J. Biol. Chem.">
        <title>The yeast transcription factor Mac1 binds to DNA in a modular fashion.</title>
        <authorList>
            <person name="Jamison McDaniels C.P."/>
            <person name="Jensen L.T."/>
            <person name="Srinivasan C."/>
            <person name="Winge D.R."/>
            <person name="Tullius T.D."/>
        </authorList>
    </citation>
    <scope>INDUCTION</scope>
</reference>
<reference key="14">
    <citation type="journal article" date="2000" name="J. Biol. Chem.">
        <title>Identification of the copper regulon in Saccharomyces cerevisiae by DNA microarrays.</title>
        <authorList>
            <person name="Gross C."/>
            <person name="Kelleher M."/>
            <person name="Iyer V.R."/>
            <person name="Brown P.O."/>
            <person name="Winge D.R."/>
        </authorList>
    </citation>
    <scope>INDUCTION</scope>
</reference>
<reference key="15">
    <citation type="journal article" date="2001" name="Antimicrob. Agents Chemother.">
        <title>Antioxidant functions required for insusceptibility of Saccharomyces cerevisiae to tetracycline antibiotics.</title>
        <authorList>
            <person name="Angrave F.E."/>
            <person name="Avery S.V."/>
        </authorList>
    </citation>
    <scope>DISRUPTION PHENOTYPE</scope>
</reference>
<reference key="16">
    <citation type="journal article" date="2002" name="J. Biol. Chem.">
        <title>Copper ion-sensing transcription factor Mac1p post-translationally controls the degradation of its target gene product Ctr1p.</title>
        <authorList>
            <person name="Yonkovich J."/>
            <person name="McKenndry R."/>
            <person name="Shi X."/>
            <person name="Zhu Z."/>
        </authorList>
    </citation>
    <scope>FUNCTION</scope>
    <scope>INDUCTION</scope>
    <scope>DOMAIN</scope>
    <scope>MUTAGENESIS OF 304-CYS--HIS-315</scope>
</reference>
<reference key="17">
    <citation type="journal article" date="2002" name="Mol. Pharmacol.">
        <title>The copper transporter CTR1 regulates cisplatin uptake in Saccharomyces cerevisiae.</title>
        <authorList>
            <person name="Lin X."/>
            <person name="Okuda T."/>
            <person name="Holzer A."/>
            <person name="Howell S.B."/>
        </authorList>
    </citation>
    <scope>FUNCTION</scope>
    <scope>TRANSPORT ACTIVITY</scope>
    <scope>BIOPHYSICOCHEMICAL PROPERTIES</scope>
</reference>
<reference key="18">
    <citation type="journal article" date="2002" name="Proc. Natl. Acad. Sci. U.S.A.">
        <title>Uptake of the anticancer drug cisplatin mediated by the copper transporter Ctr1 in yeast and mammals.</title>
        <authorList>
            <person name="Ishida S."/>
            <person name="Lee J."/>
            <person name="Thiele D.J."/>
            <person name="Herskowitz I."/>
        </authorList>
    </citation>
    <scope>FUNCTION</scope>
    <scope>DISRUPTION PHENOTYPE</scope>
</reference>
<reference key="19">
    <citation type="journal article" date="2003" name="Biochem. Biophys. Res. Commun.">
        <title>Copper(II) protects yeast against the toxicity of cisplatin independently of the induction of metallothionein and the inhibition of platinum uptake.</title>
        <authorList>
            <person name="Ohashi K."/>
            <person name="Kajiya K."/>
            <person name="Inaba S."/>
            <person name="Hasegawa T."/>
            <person name="Seko Y."/>
            <person name="Furuchi T."/>
            <person name="Naganuma A."/>
        </authorList>
    </citation>
    <scope>FUNCTION</scope>
</reference>
<reference key="20">
    <citation type="journal article" date="2003" name="Nature">
        <title>Global analysis of protein expression in yeast.</title>
        <authorList>
            <person name="Ghaemmaghami S."/>
            <person name="Huh W.-K."/>
            <person name="Bower K."/>
            <person name="Howson R.W."/>
            <person name="Belle A."/>
            <person name="Dephoure N."/>
            <person name="O'Shea E.K."/>
            <person name="Weissman J.S."/>
        </authorList>
    </citation>
    <scope>LEVEL OF PROTEIN EXPRESSION [LARGE SCALE ANALYSIS]</scope>
</reference>
<reference key="21">
    <citation type="journal article" date="2004" name="J. Am. Chem. Soc.">
        <title>C-terminal domain of the membrane copper transporter Ctr1 from Saccharomyces cerevisiae binds four Cu(I) ions as a cuprous-thiolate polynuclear cluster: sub-femtomolar Cu(I) affinity of three proteins involved in copper trafficking.</title>
        <authorList>
            <person name="Xiao Z."/>
            <person name="Loughlin F."/>
            <person name="George G.N."/>
            <person name="Howlett G.J."/>
            <person name="Wedd A.G."/>
        </authorList>
    </citation>
    <scope>FUNCTION</scope>
    <scope>DOMAIN</scope>
    <scope>COPPER-BINDING</scope>
</reference>
<reference key="22">
    <citation type="journal article" date="2007" name="J. Proteome Res.">
        <title>Large-scale phosphorylation analysis of alpha-factor-arrested Saccharomyces cerevisiae.</title>
        <authorList>
            <person name="Li X."/>
            <person name="Gerber S.A."/>
            <person name="Rudner A.D."/>
            <person name="Beausoleil S.A."/>
            <person name="Haas W."/>
            <person name="Villen J."/>
            <person name="Elias J.E."/>
            <person name="Gygi S.P."/>
        </authorList>
    </citation>
    <scope>PHOSPHORYLATION [LARGE SCALE ANALYSIS] AT SER-344; THR-356 AND SER-369</scope>
    <scope>IDENTIFICATION BY MASS SPECTROMETRY [LARGE SCALE ANALYSIS]</scope>
    <source>
        <strain>ADR376</strain>
    </source>
</reference>
<reference key="23">
    <citation type="journal article" date="2008" name="Mol. Cell. Proteomics">
        <title>A multidimensional chromatography technology for in-depth phosphoproteome analysis.</title>
        <authorList>
            <person name="Albuquerque C.P."/>
            <person name="Smolka M.B."/>
            <person name="Payne S.H."/>
            <person name="Bafna V."/>
            <person name="Eng J."/>
            <person name="Zhou H."/>
        </authorList>
    </citation>
    <scope>PHOSPHORYLATION [LARGE SCALE ANALYSIS] AT SER-344 AND SER-349</scope>
    <scope>IDENTIFICATION BY MASS SPECTROMETRY [LARGE SCALE ANALYSIS]</scope>
</reference>
<reference key="24">
    <citation type="journal article" date="2012" name="Proteomics">
        <title>Sites of ubiquitin attachment in Saccharomyces cerevisiae.</title>
        <authorList>
            <person name="Starita L.M."/>
            <person name="Lo R.S."/>
            <person name="Eng J.K."/>
            <person name="von Haller P.D."/>
            <person name="Fields S."/>
        </authorList>
    </citation>
    <scope>UBIQUITINATION [LARGE SCALE ANALYSIS] AT LYS-345</scope>
    <scope>IDENTIFICATION BY MASS SPECTROMETRY [LARGE SCALE ANALYSIS]</scope>
</reference>
<proteinExistence type="evidence at protein level"/>
<comment type="function">
    <text evidence="7 8 9 11 12 13 15">High-affinity copper transporter of plasma membrane that mediates copper uptake under low copper conditions (PubMed:12391279, PubMed:7929270, PubMed:8293472, PubMed:8756349). Copper transport through the high affinity system requiring CTRl supplies the iron transport multicopper ferroxidase FET3 with copper, which in turn is required for ferrous iron uptake (PubMed:8293472). The energy for translocation is unlikely to be directly derived from ATP hydrolysis and the exact mechanism driving the transmembrane transport of copper has still to be determined (PubMed:7929270). Binds 4 copper ions via its C-terminal cystein-rich domain and is able to deliver Cu(I) directly to both the chaperone ATX1 and to an N-terminal domain of the CCC2 protein (PubMed:15012137). Also able to mediate the uptake of the anticancer drug cisplatin (PubMed:12370430, PubMed:12391279, PubMed:14511662).</text>
</comment>
<comment type="catalytic activity">
    <reaction evidence="8 12">
        <text>Cu(2+)(in) = Cu(2+)(out)</text>
        <dbReference type="Rhea" id="RHEA:28703"/>
        <dbReference type="ChEBI" id="CHEBI:29036"/>
    </reaction>
    <physiologicalReaction direction="right-to-left" evidence="8 12">
        <dbReference type="Rhea" id="RHEA:28705"/>
    </physiologicalReaction>
</comment>
<comment type="biophysicochemical properties">
    <kinetics>
        <KM evidence="8">128.8 uM for copper influx</KM>
        <KM evidence="8">140.2 uM for cisplatin influx</KM>
        <Vmax evidence="8">169.5 nmol/min/mg enzyme towards copper</Vmax>
        <Vmax evidence="8">76.9 nmol/min/mg enzyme towards cisplatin</Vmax>
    </kinetics>
</comment>
<comment type="subunit">
    <text evidence="12">Homooligomer.</text>
</comment>
<comment type="subcellular location">
    <subcellularLocation>
        <location evidence="13">Cell membrane</location>
        <topology evidence="1">Multi-pass membrane protein</topology>
    </subcellularLocation>
</comment>
<comment type="induction">
    <text evidence="3 4 6 12 16 17 18 19 20">Expression is induced by copper deprivation, and repressed by copper sufficiency (PubMed:7929270). Expression is regulated by the copper ion-sensing transcription factor MAC1 through the cis-acting copper ion-responsive element 5'-TTTGCTCA-3', termed CuRE, present in its promoter (PubMed:10480908, PubMed:10922376, PubMed:12011036, PubMed:9188496, PubMed:9211922, PubMed:9599102, PubMed:9726991, PubMed:9867833).</text>
</comment>
<comment type="domain">
    <text evidence="13">Within the N-terminal cytosolic region appear three 19 amino acid repeated elements containing the M-X-X-M copper-binding motifs.</text>
</comment>
<comment type="domain">
    <text evidence="6">The REP-III motif within the C-terminal cytosolic part resembles a shortened MAC1 copper ion-sensing motif (REP) and plays a role in the CTR1 degradation.</text>
</comment>
<comment type="PTM">
    <text evidence="12">Extensively O-glycosylated.</text>
</comment>
<comment type="disruption phenotype">
    <text evidence="5 7 12 13 15">Reduces copper uptake and leads to altered cellular responses to extracellular copper such as deficient and copper and zinc superoxide dismutase activity (PubMed:7929270, PubMed:8756349). Results in profound deficiency in ferrous iron uptake (PubMed:8293472). Results in increased cisplatin resistance and reduced intracellular accumulation of cisplatin (PubMed:12370430). Exhibits marked sensitization to oxytetracycline (OTC) and doxycycline (DOX) (PubMed:11557497).</text>
</comment>
<comment type="miscellaneous">
    <text evidence="6 14">CTR1 undergoes MAC1-dependent degradation at the membrane in cells exposed to high copper levels and in a fashion independent of endocytosis.</text>
</comment>
<comment type="miscellaneous">
    <text evidence="10">Present with 1180 molecules/cell in log phase SD medium.</text>
</comment>
<sequence>MEGMNMGSSMNMDAMSSASKTVASSMASMSMDAMSSASKTILSSMSSMSMEAMSSASKTLASTMSSMASMSMGSSSMSGMSMSMSSTPTSSASAQTTSDSSMSGMSGMSSSDNSSSSGMDMDMSMGMNYYLTPTYKNYPVLFHHLHANNSGKAFGIFLLFVVAAFVYKLLLFVSWCLEVHWFKKWDKQNKYSTLPSANSKDEGKHYDTENNFEIQGLPKLPNLLSDIFVPSLMDLFHDIIRAFLVFTSTMIIYMLMLATMSFVLTYVFAVITGLALSEVFFNRCKIAMLKRWDIQREIQKAKSCPGFGNCQCGRHPEPSPDPIAVADTTSGSDQSTRLEKNNESKVAISENNQKKTPTQEEGCNCATDSGKNQANIERDILENSKLQEQSGNMDQNLLPAEKFTHN</sequence>
<dbReference type="EMBL" id="U02511">
    <property type="protein sequence ID" value="AAA17369.1"/>
    <property type="molecule type" value="Genomic_DNA"/>
</dbReference>
<dbReference type="EMBL" id="U40828">
    <property type="protein sequence ID" value="AAB68064.1"/>
    <property type="molecule type" value="Genomic_DNA"/>
</dbReference>
<dbReference type="EMBL" id="AY693062">
    <property type="protein sequence ID" value="AAT93081.1"/>
    <property type="molecule type" value="Genomic_DNA"/>
</dbReference>
<dbReference type="EMBL" id="BK006949">
    <property type="protein sequence ID" value="DAA11538.1"/>
    <property type="molecule type" value="Genomic_DNA"/>
</dbReference>
<dbReference type="PIR" id="A53010">
    <property type="entry name" value="A53010"/>
</dbReference>
<dbReference type="RefSeq" id="NP_015449.1">
    <property type="nucleotide sequence ID" value="NM_001184221.1"/>
</dbReference>
<dbReference type="BioGRID" id="36292">
    <property type="interactions" value="106"/>
</dbReference>
<dbReference type="DIP" id="DIP-6447N"/>
<dbReference type="FunCoup" id="P49573">
    <property type="interactions" value="186"/>
</dbReference>
<dbReference type="IntAct" id="P49573">
    <property type="interactions" value="9"/>
</dbReference>
<dbReference type="MINT" id="P49573"/>
<dbReference type="STRING" id="4932.YPR124W"/>
<dbReference type="TCDB" id="1.A.56.2.1">
    <property type="family name" value="the copper transporter (ctr) family"/>
</dbReference>
<dbReference type="GlyCosmos" id="P49573">
    <property type="glycosylation" value="2 sites, No reported glycans"/>
</dbReference>
<dbReference type="iPTMnet" id="P49573"/>
<dbReference type="PaxDb" id="4932-YPR124W"/>
<dbReference type="PeptideAtlas" id="P49573"/>
<dbReference type="EnsemblFungi" id="YPR124W_mRNA">
    <property type="protein sequence ID" value="YPR124W"/>
    <property type="gene ID" value="YPR124W"/>
</dbReference>
<dbReference type="GeneID" id="856241"/>
<dbReference type="KEGG" id="sce:YPR124W"/>
<dbReference type="AGR" id="SGD:S000006328"/>
<dbReference type="SGD" id="S000006328">
    <property type="gene designation" value="CTR1"/>
</dbReference>
<dbReference type="VEuPathDB" id="FungiDB:YPR124W"/>
<dbReference type="eggNOG" id="ENOG502QVCV">
    <property type="taxonomic scope" value="Eukaryota"/>
</dbReference>
<dbReference type="HOGENOM" id="CLU_819370_0_0_1"/>
<dbReference type="InParanoid" id="P49573"/>
<dbReference type="OMA" id="LKRWDIQ"/>
<dbReference type="OrthoDB" id="73901at2759"/>
<dbReference type="BioCyc" id="YEAST:G3O-34262-MONOMER"/>
<dbReference type="BioGRID-ORCS" id="856241">
    <property type="hits" value="0 hits in 10 CRISPR screens"/>
</dbReference>
<dbReference type="PRO" id="PR:P49573"/>
<dbReference type="Proteomes" id="UP000002311">
    <property type="component" value="Chromosome XVI"/>
</dbReference>
<dbReference type="RNAct" id="P49573">
    <property type="molecule type" value="protein"/>
</dbReference>
<dbReference type="GO" id="GO:0005737">
    <property type="term" value="C:cytoplasm"/>
    <property type="evidence" value="ECO:0007005"/>
    <property type="project" value="SGD"/>
</dbReference>
<dbReference type="GO" id="GO:0016020">
    <property type="term" value="C:membrane"/>
    <property type="evidence" value="ECO:0000314"/>
    <property type="project" value="CACAO"/>
</dbReference>
<dbReference type="GO" id="GO:0005634">
    <property type="term" value="C:nucleus"/>
    <property type="evidence" value="ECO:0007005"/>
    <property type="project" value="SGD"/>
</dbReference>
<dbReference type="GO" id="GO:0005886">
    <property type="term" value="C:plasma membrane"/>
    <property type="evidence" value="ECO:0000314"/>
    <property type="project" value="SGD"/>
</dbReference>
<dbReference type="GO" id="GO:0005375">
    <property type="term" value="F:copper ion transmembrane transporter activity"/>
    <property type="evidence" value="ECO:0000315"/>
    <property type="project" value="SGD"/>
</dbReference>
<dbReference type="GO" id="GO:0015677">
    <property type="term" value="P:copper ion import"/>
    <property type="evidence" value="ECO:0000315"/>
    <property type="project" value="SGD"/>
</dbReference>
<dbReference type="InterPro" id="IPR007274">
    <property type="entry name" value="Cop_transporter"/>
</dbReference>
<dbReference type="PANTHER" id="PTHR12483:SF27">
    <property type="entry name" value="COPPER TRANSPORT PROTEIN CTR1"/>
    <property type="match status" value="1"/>
</dbReference>
<dbReference type="PANTHER" id="PTHR12483">
    <property type="entry name" value="SOLUTE CARRIER FAMILY 31 COPPER TRANSPORTERS"/>
    <property type="match status" value="1"/>
</dbReference>
<dbReference type="Pfam" id="PF04145">
    <property type="entry name" value="Ctr"/>
    <property type="match status" value="1"/>
</dbReference>
<gene>
    <name evidence="21" type="primary">CTR1</name>
    <name type="ordered locus">YPR124W</name>
    <name type="ORF">P9642.3</name>
</gene>
<evidence type="ECO:0000255" key="1"/>
<evidence type="ECO:0000256" key="2">
    <source>
        <dbReference type="SAM" id="MobiDB-lite"/>
    </source>
</evidence>
<evidence type="ECO:0000269" key="3">
    <source>
    </source>
</evidence>
<evidence type="ECO:0000269" key="4">
    <source>
    </source>
</evidence>
<evidence type="ECO:0000269" key="5">
    <source>
    </source>
</evidence>
<evidence type="ECO:0000269" key="6">
    <source>
    </source>
</evidence>
<evidence type="ECO:0000269" key="7">
    <source>
    </source>
</evidence>
<evidence type="ECO:0000269" key="8">
    <source>
    </source>
</evidence>
<evidence type="ECO:0000269" key="9">
    <source>
    </source>
</evidence>
<evidence type="ECO:0000269" key="10">
    <source>
    </source>
</evidence>
<evidence type="ECO:0000269" key="11">
    <source>
    </source>
</evidence>
<evidence type="ECO:0000269" key="12">
    <source>
    </source>
</evidence>
<evidence type="ECO:0000269" key="13">
    <source>
    </source>
</evidence>
<evidence type="ECO:0000269" key="14">
    <source>
    </source>
</evidence>
<evidence type="ECO:0000269" key="15">
    <source>
    </source>
</evidence>
<evidence type="ECO:0000269" key="16">
    <source>
    </source>
</evidence>
<evidence type="ECO:0000269" key="17">
    <source>
    </source>
</evidence>
<evidence type="ECO:0000269" key="18">
    <source>
    </source>
</evidence>
<evidence type="ECO:0000269" key="19">
    <source>
    </source>
</evidence>
<evidence type="ECO:0000269" key="20">
    <source>
    </source>
</evidence>
<evidence type="ECO:0000303" key="21">
    <source>
    </source>
</evidence>
<evidence type="ECO:0000305" key="22">
    <source>
    </source>
</evidence>
<evidence type="ECO:0007744" key="23">
    <source>
    </source>
</evidence>
<evidence type="ECO:0007744" key="24">
    <source>
    </source>
</evidence>
<evidence type="ECO:0007744" key="25">
    <source>
    </source>
</evidence>
<protein>
    <recommendedName>
        <fullName evidence="21">Copper transport protein CTR1</fullName>
        <shortName evidence="21">Copper transporter 1</shortName>
    </recommendedName>
</protein>
<organism>
    <name type="scientific">Saccharomyces cerevisiae (strain ATCC 204508 / S288c)</name>
    <name type="common">Baker's yeast</name>
    <dbReference type="NCBI Taxonomy" id="559292"/>
    <lineage>
        <taxon>Eukaryota</taxon>
        <taxon>Fungi</taxon>
        <taxon>Dikarya</taxon>
        <taxon>Ascomycota</taxon>
        <taxon>Saccharomycotina</taxon>
        <taxon>Saccharomycetes</taxon>
        <taxon>Saccharomycetales</taxon>
        <taxon>Saccharomycetaceae</taxon>
        <taxon>Saccharomyces</taxon>
    </lineage>
</organism>
<accession>P49573</accession>
<accession>D6W4C2</accession>
<feature type="chain" id="PRO_0000079496" description="Copper transport protein CTR1">
    <location>
        <begin position="1"/>
        <end position="406"/>
    </location>
</feature>
<feature type="topological domain" description="Cytoplasmic" evidence="22">
    <location>
        <begin position="1"/>
        <end position="152"/>
    </location>
</feature>
<feature type="transmembrane region" description="Helical" evidence="1">
    <location>
        <begin position="153"/>
        <end position="173"/>
    </location>
</feature>
<feature type="topological domain" description="Extracellular" evidence="22">
    <location>
        <begin position="174"/>
        <end position="250"/>
    </location>
</feature>
<feature type="transmembrane region" description="Helical" evidence="1">
    <location>
        <begin position="251"/>
        <end position="271"/>
    </location>
</feature>
<feature type="topological domain" description="Cytoplasmic" evidence="13">
    <location>
        <begin position="272"/>
        <end position="406"/>
    </location>
</feature>
<feature type="repeat" description="1" evidence="13">
    <location>
        <begin position="9"/>
        <end position="27"/>
    </location>
</feature>
<feature type="repeat" description="2" evidence="13">
    <location>
        <begin position="28"/>
        <end position="46"/>
    </location>
</feature>
<feature type="repeat" description="3" evidence="13">
    <location>
        <begin position="47"/>
        <end position="65"/>
    </location>
</feature>
<feature type="region of interest" description="3 X 19 AA tandem repeats of S-M-X-M-X-A-M-S-S-A-S-K-T-X-X-S-X-M-X" evidence="13">
    <location>
        <begin position="9"/>
        <end position="65"/>
    </location>
</feature>
<feature type="region of interest" description="Disordered" evidence="2">
    <location>
        <begin position="71"/>
        <end position="117"/>
    </location>
</feature>
<feature type="region of interest" description="Disordered" evidence="2">
    <location>
        <begin position="318"/>
        <end position="406"/>
    </location>
</feature>
<feature type="short sequence motif" description="REP-III" evidence="6">
    <location>
        <begin position="304"/>
        <end position="315"/>
    </location>
</feature>
<feature type="compositionally biased region" description="Polar residues" evidence="2">
    <location>
        <begin position="349"/>
        <end position="375"/>
    </location>
</feature>
<feature type="compositionally biased region" description="Polar residues" evidence="2">
    <location>
        <begin position="384"/>
        <end position="395"/>
    </location>
</feature>
<feature type="modified residue" description="Phosphoserine" evidence="23 24">
    <location>
        <position position="344"/>
    </location>
</feature>
<feature type="modified residue" description="Phosphoserine" evidence="24">
    <location>
        <position position="349"/>
    </location>
</feature>
<feature type="modified residue" description="Phosphothreonine" evidence="23">
    <location>
        <position position="356"/>
    </location>
</feature>
<feature type="modified residue" description="Phosphoserine" evidence="23">
    <location>
        <position position="369"/>
    </location>
</feature>
<feature type="cross-link" description="Glycyl lysine isopeptide (Lys-Gly) (interchain with G-Cter in ubiquitin)" evidence="25">
    <location>
        <position position="345"/>
    </location>
</feature>
<feature type="mutagenesis site" description="Causes defects in CTR1 turnover." evidence="6">
    <original>CPGFGNCQCGRH</original>
    <variation>SPGFGNSQSGRS</variation>
    <location>
        <begin position="304"/>
        <end position="315"/>
    </location>
</feature>
<keyword id="KW-1003">Cell membrane</keyword>
<keyword id="KW-0186">Copper</keyword>
<keyword id="KW-0187">Copper transport</keyword>
<keyword id="KW-0406">Ion transport</keyword>
<keyword id="KW-1017">Isopeptide bond</keyword>
<keyword id="KW-0472">Membrane</keyword>
<keyword id="KW-0597">Phosphoprotein</keyword>
<keyword id="KW-1185">Reference proteome</keyword>
<keyword id="KW-0677">Repeat</keyword>
<keyword id="KW-0812">Transmembrane</keyword>
<keyword id="KW-1133">Transmembrane helix</keyword>
<keyword id="KW-0813">Transport</keyword>
<keyword id="KW-0832">Ubl conjugation</keyword>